<dbReference type="EMBL" id="CP000247">
    <property type="protein sequence ID" value="ABG68084.1"/>
    <property type="molecule type" value="Genomic_DNA"/>
</dbReference>
<dbReference type="RefSeq" id="WP_001091507.1">
    <property type="nucleotide sequence ID" value="NC_008253.1"/>
</dbReference>
<dbReference type="SMR" id="Q0TLU7"/>
<dbReference type="KEGG" id="ecp:ECP_0042"/>
<dbReference type="HOGENOM" id="CLU_034178_0_1_6"/>
<dbReference type="UniPathway" id="UPA00117"/>
<dbReference type="Proteomes" id="UP000009182">
    <property type="component" value="Chromosome"/>
</dbReference>
<dbReference type="GO" id="GO:0009055">
    <property type="term" value="F:electron transfer activity"/>
    <property type="evidence" value="ECO:0007669"/>
    <property type="project" value="InterPro"/>
</dbReference>
<dbReference type="GO" id="GO:0050660">
    <property type="term" value="F:flavin adenine dinucleotide binding"/>
    <property type="evidence" value="ECO:0007669"/>
    <property type="project" value="InterPro"/>
</dbReference>
<dbReference type="GO" id="GO:0009437">
    <property type="term" value="P:carnitine metabolic process"/>
    <property type="evidence" value="ECO:0007669"/>
    <property type="project" value="UniProtKB-UniRule"/>
</dbReference>
<dbReference type="GO" id="GO:0033539">
    <property type="term" value="P:fatty acid beta-oxidation using acyl-CoA dehydrogenase"/>
    <property type="evidence" value="ECO:0007669"/>
    <property type="project" value="TreeGrafter"/>
</dbReference>
<dbReference type="FunFam" id="3.40.50.1220:FF:000004">
    <property type="entry name" value="Electron transfer flavoprotein"/>
    <property type="match status" value="1"/>
</dbReference>
<dbReference type="FunFam" id="3.40.50.620:FF:000067">
    <property type="entry name" value="Protein FixB"/>
    <property type="match status" value="1"/>
</dbReference>
<dbReference type="Gene3D" id="3.40.50.620">
    <property type="entry name" value="HUPs"/>
    <property type="match status" value="1"/>
</dbReference>
<dbReference type="Gene3D" id="3.40.50.1220">
    <property type="entry name" value="TPP-binding domain"/>
    <property type="match status" value="1"/>
</dbReference>
<dbReference type="HAMAP" id="MF_01056">
    <property type="entry name" value="FixB"/>
    <property type="match status" value="1"/>
</dbReference>
<dbReference type="InterPro" id="IPR029035">
    <property type="entry name" value="DHS-like_NAD/FAD-binding_dom"/>
</dbReference>
<dbReference type="InterPro" id="IPR014730">
    <property type="entry name" value="ETF_a/b_N"/>
</dbReference>
<dbReference type="InterPro" id="IPR001308">
    <property type="entry name" value="ETF_a/FixB"/>
</dbReference>
<dbReference type="InterPro" id="IPR014731">
    <property type="entry name" value="ETF_asu_C"/>
</dbReference>
<dbReference type="InterPro" id="IPR018206">
    <property type="entry name" value="ETF_asu_C_CS"/>
</dbReference>
<dbReference type="InterPro" id="IPR023461">
    <property type="entry name" value="FixB"/>
</dbReference>
<dbReference type="InterPro" id="IPR014729">
    <property type="entry name" value="Rossmann-like_a/b/a_fold"/>
</dbReference>
<dbReference type="NCBIfam" id="NF002889">
    <property type="entry name" value="PRK03363.1"/>
    <property type="match status" value="1"/>
</dbReference>
<dbReference type="PANTHER" id="PTHR43153">
    <property type="entry name" value="ELECTRON TRANSFER FLAVOPROTEIN ALPHA"/>
    <property type="match status" value="1"/>
</dbReference>
<dbReference type="PANTHER" id="PTHR43153:SF5">
    <property type="entry name" value="PROTEIN FIXB-RELATED"/>
    <property type="match status" value="1"/>
</dbReference>
<dbReference type="Pfam" id="PF01012">
    <property type="entry name" value="ETF"/>
    <property type="match status" value="1"/>
</dbReference>
<dbReference type="Pfam" id="PF00766">
    <property type="entry name" value="ETF_alpha"/>
    <property type="match status" value="1"/>
</dbReference>
<dbReference type="PIRSF" id="PIRSF000089">
    <property type="entry name" value="Electra_flavoP_a"/>
    <property type="match status" value="1"/>
</dbReference>
<dbReference type="SMART" id="SM00893">
    <property type="entry name" value="ETF"/>
    <property type="match status" value="1"/>
</dbReference>
<dbReference type="SUPFAM" id="SSF52402">
    <property type="entry name" value="Adenine nucleotide alpha hydrolases-like"/>
    <property type="match status" value="1"/>
</dbReference>
<dbReference type="SUPFAM" id="SSF52467">
    <property type="entry name" value="DHS-like NAD/FAD-binding domain"/>
    <property type="match status" value="1"/>
</dbReference>
<dbReference type="PROSITE" id="PS00696">
    <property type="entry name" value="ETF_ALPHA"/>
    <property type="match status" value="1"/>
</dbReference>
<evidence type="ECO:0000255" key="1">
    <source>
        <dbReference type="HAMAP-Rule" id="MF_01056"/>
    </source>
</evidence>
<organism>
    <name type="scientific">Escherichia coli O6:K15:H31 (strain 536 / UPEC)</name>
    <dbReference type="NCBI Taxonomy" id="362663"/>
    <lineage>
        <taxon>Bacteria</taxon>
        <taxon>Pseudomonadati</taxon>
        <taxon>Pseudomonadota</taxon>
        <taxon>Gammaproteobacteria</taxon>
        <taxon>Enterobacterales</taxon>
        <taxon>Enterobacteriaceae</taxon>
        <taxon>Escherichia</taxon>
    </lineage>
</organism>
<feature type="chain" id="PRO_0000300965" description="Protein FixB">
    <location>
        <begin position="1"/>
        <end position="313"/>
    </location>
</feature>
<feature type="binding site" evidence="1">
    <location>
        <begin position="255"/>
        <end position="283"/>
    </location>
    <ligand>
        <name>FAD</name>
        <dbReference type="ChEBI" id="CHEBI:57692"/>
    </ligand>
</feature>
<protein>
    <recommendedName>
        <fullName evidence="1">Protein FixB</fullName>
    </recommendedName>
</protein>
<sequence>MNTFSQVWVFSDTPSRLPELMNGAQALANQINTFVLNDADGAQAIQLGANHVWKLNGKPNDRMIEDYAGVIADTIRQHGADGLVLLPNTRRGKLLAAKLGYRLNAAVSNDASTVSVQDGKATVKHMVYGGLAIGEERIATPYAVLTISSGTFDVAQPDASRTGETHTVEWQAPAVAITRTATQARQSNSVDLDKARLVVSVGRGIGSKENIALAEQLCKAIGAELACSRPVAENEKWMEHERYVGISNLMLKPELYLAVGISGQIQHMVGANASQTIFAINKDKNAPIFQYADYGIVGDAVKILPALTAALAR</sequence>
<name>FIXB_ECOL5</name>
<accession>Q0TLU7</accession>
<reference key="1">
    <citation type="journal article" date="2006" name="Mol. Microbiol.">
        <title>Role of pathogenicity island-associated integrases in the genome plasticity of uropathogenic Escherichia coli strain 536.</title>
        <authorList>
            <person name="Hochhut B."/>
            <person name="Wilde C."/>
            <person name="Balling G."/>
            <person name="Middendorf B."/>
            <person name="Dobrindt U."/>
            <person name="Brzuszkiewicz E."/>
            <person name="Gottschalk G."/>
            <person name="Carniel E."/>
            <person name="Hacker J."/>
        </authorList>
    </citation>
    <scope>NUCLEOTIDE SEQUENCE [LARGE SCALE GENOMIC DNA]</scope>
    <source>
        <strain>536 / UPEC</strain>
    </source>
</reference>
<comment type="function">
    <text evidence="1">Required for anaerobic carnitine reduction. May bring reductant to CaiA.</text>
</comment>
<comment type="pathway">
    <text evidence="1">Amine and polyamine metabolism; carnitine metabolism.</text>
</comment>
<comment type="subunit">
    <text evidence="1">Heterodimer of FixA and FixB.</text>
</comment>
<comment type="similarity">
    <text evidence="1">Belongs to the ETF alpha-subunit/FixB family.</text>
</comment>
<gene>
    <name evidence="1" type="primary">fixB</name>
    <name type="ordered locus">ECP_0042</name>
</gene>
<keyword id="KW-0249">Electron transport</keyword>
<keyword id="KW-0274">FAD</keyword>
<keyword id="KW-0285">Flavoprotein</keyword>
<keyword id="KW-0813">Transport</keyword>
<proteinExistence type="inferred from homology"/>